<sequence>MKTAQELRVGNVVMIGNDPLVVQKTEYNKSGRNAAVVKMKFKNLLTEAASEAVYKADDKFDVVILEKKEVTYSYFADPMYVFMDAEYNQYEVEADNMTDALNFLEDGMTCEVVFYNGKAISVDLPNSVVREITYTEPAVKGDTSGKVMKPAKIATGFELAVPLFCDIGDKIEIDTRTLEYKNRVK</sequence>
<proteinExistence type="inferred from homology"/>
<feature type="chain" id="PRO_1000010776" description="Elongation factor P">
    <location>
        <begin position="1"/>
        <end position="185"/>
    </location>
</feature>
<reference key="1">
    <citation type="submission" date="2006-03" db="EMBL/GenBank/DDBJ databases">
        <title>Complete sequence of Methylobacillus flagellatus KT.</title>
        <authorList>
            <consortium name="US DOE Joint Genome Institute"/>
            <person name="Copeland A."/>
            <person name="Lucas S."/>
            <person name="Lapidus A."/>
            <person name="Barry K."/>
            <person name="Detter J.C."/>
            <person name="Glavina del Rio T."/>
            <person name="Hammon N."/>
            <person name="Israni S."/>
            <person name="Dalin E."/>
            <person name="Tice H."/>
            <person name="Pitluck S."/>
            <person name="Brettin T."/>
            <person name="Bruce D."/>
            <person name="Han C."/>
            <person name="Tapia R."/>
            <person name="Saunders E."/>
            <person name="Gilna P."/>
            <person name="Schmutz J."/>
            <person name="Larimer F."/>
            <person name="Land M."/>
            <person name="Kyrpides N."/>
            <person name="Anderson I."/>
            <person name="Richardson P."/>
        </authorList>
    </citation>
    <scope>NUCLEOTIDE SEQUENCE [LARGE SCALE GENOMIC DNA]</scope>
    <source>
        <strain>ATCC 51484 / DSM 6875 / VKM B-1610 / KT</strain>
    </source>
</reference>
<name>EFP_METFK</name>
<gene>
    <name evidence="1" type="primary">efp</name>
    <name type="ordered locus">Mfla_1755</name>
</gene>
<evidence type="ECO:0000255" key="1">
    <source>
        <dbReference type="HAMAP-Rule" id="MF_00141"/>
    </source>
</evidence>
<dbReference type="EMBL" id="CP000284">
    <property type="protein sequence ID" value="ABE50023.1"/>
    <property type="molecule type" value="Genomic_DNA"/>
</dbReference>
<dbReference type="RefSeq" id="WP_011479977.1">
    <property type="nucleotide sequence ID" value="NC_007947.1"/>
</dbReference>
<dbReference type="SMR" id="Q1H0G4"/>
<dbReference type="STRING" id="265072.Mfla_1755"/>
<dbReference type="KEGG" id="mfa:Mfla_1755"/>
<dbReference type="eggNOG" id="COG0231">
    <property type="taxonomic scope" value="Bacteria"/>
</dbReference>
<dbReference type="HOGENOM" id="CLU_074944_2_1_4"/>
<dbReference type="OrthoDB" id="9801844at2"/>
<dbReference type="UniPathway" id="UPA00345"/>
<dbReference type="Proteomes" id="UP000002440">
    <property type="component" value="Chromosome"/>
</dbReference>
<dbReference type="GO" id="GO:0005737">
    <property type="term" value="C:cytoplasm"/>
    <property type="evidence" value="ECO:0007669"/>
    <property type="project" value="UniProtKB-SubCell"/>
</dbReference>
<dbReference type="GO" id="GO:0003746">
    <property type="term" value="F:translation elongation factor activity"/>
    <property type="evidence" value="ECO:0007669"/>
    <property type="project" value="UniProtKB-UniRule"/>
</dbReference>
<dbReference type="GO" id="GO:0043043">
    <property type="term" value="P:peptide biosynthetic process"/>
    <property type="evidence" value="ECO:0007669"/>
    <property type="project" value="InterPro"/>
</dbReference>
<dbReference type="CDD" id="cd04470">
    <property type="entry name" value="S1_EF-P_repeat_1"/>
    <property type="match status" value="1"/>
</dbReference>
<dbReference type="CDD" id="cd05794">
    <property type="entry name" value="S1_EF-P_repeat_2"/>
    <property type="match status" value="1"/>
</dbReference>
<dbReference type="FunFam" id="2.30.30.30:FF:000003">
    <property type="entry name" value="Elongation factor P"/>
    <property type="match status" value="1"/>
</dbReference>
<dbReference type="FunFam" id="2.40.50.140:FF:000004">
    <property type="entry name" value="Elongation factor P"/>
    <property type="match status" value="1"/>
</dbReference>
<dbReference type="FunFam" id="2.40.50.140:FF:000009">
    <property type="entry name" value="Elongation factor P"/>
    <property type="match status" value="1"/>
</dbReference>
<dbReference type="Gene3D" id="2.30.30.30">
    <property type="match status" value="1"/>
</dbReference>
<dbReference type="Gene3D" id="2.40.50.140">
    <property type="entry name" value="Nucleic acid-binding proteins"/>
    <property type="match status" value="2"/>
</dbReference>
<dbReference type="HAMAP" id="MF_00141">
    <property type="entry name" value="EF_P"/>
    <property type="match status" value="1"/>
</dbReference>
<dbReference type="InterPro" id="IPR015365">
    <property type="entry name" value="Elong-fact-P_C"/>
</dbReference>
<dbReference type="InterPro" id="IPR012340">
    <property type="entry name" value="NA-bd_OB-fold"/>
</dbReference>
<dbReference type="InterPro" id="IPR014722">
    <property type="entry name" value="Rib_uL2_dom2"/>
</dbReference>
<dbReference type="InterPro" id="IPR020599">
    <property type="entry name" value="Transl_elong_fac_P/YeiP"/>
</dbReference>
<dbReference type="InterPro" id="IPR013185">
    <property type="entry name" value="Transl_elong_KOW-like"/>
</dbReference>
<dbReference type="InterPro" id="IPR001059">
    <property type="entry name" value="Transl_elong_P/YeiP_cen"/>
</dbReference>
<dbReference type="InterPro" id="IPR013852">
    <property type="entry name" value="Transl_elong_P/YeiP_CS"/>
</dbReference>
<dbReference type="InterPro" id="IPR011768">
    <property type="entry name" value="Transl_elongation_fac_P"/>
</dbReference>
<dbReference type="InterPro" id="IPR008991">
    <property type="entry name" value="Translation_prot_SH3-like_sf"/>
</dbReference>
<dbReference type="NCBIfam" id="TIGR00038">
    <property type="entry name" value="efp"/>
    <property type="match status" value="1"/>
</dbReference>
<dbReference type="NCBIfam" id="NF001810">
    <property type="entry name" value="PRK00529.1"/>
    <property type="match status" value="1"/>
</dbReference>
<dbReference type="PANTHER" id="PTHR30053">
    <property type="entry name" value="ELONGATION FACTOR P"/>
    <property type="match status" value="1"/>
</dbReference>
<dbReference type="PANTHER" id="PTHR30053:SF12">
    <property type="entry name" value="ELONGATION FACTOR P (EF-P) FAMILY PROTEIN"/>
    <property type="match status" value="1"/>
</dbReference>
<dbReference type="Pfam" id="PF01132">
    <property type="entry name" value="EFP"/>
    <property type="match status" value="1"/>
</dbReference>
<dbReference type="Pfam" id="PF08207">
    <property type="entry name" value="EFP_N"/>
    <property type="match status" value="1"/>
</dbReference>
<dbReference type="Pfam" id="PF09285">
    <property type="entry name" value="Elong-fact-P_C"/>
    <property type="match status" value="1"/>
</dbReference>
<dbReference type="PIRSF" id="PIRSF005901">
    <property type="entry name" value="EF-P"/>
    <property type="match status" value="1"/>
</dbReference>
<dbReference type="SMART" id="SM01185">
    <property type="entry name" value="EFP"/>
    <property type="match status" value="1"/>
</dbReference>
<dbReference type="SMART" id="SM00841">
    <property type="entry name" value="Elong-fact-P_C"/>
    <property type="match status" value="1"/>
</dbReference>
<dbReference type="SUPFAM" id="SSF50249">
    <property type="entry name" value="Nucleic acid-binding proteins"/>
    <property type="match status" value="2"/>
</dbReference>
<dbReference type="SUPFAM" id="SSF50104">
    <property type="entry name" value="Translation proteins SH3-like domain"/>
    <property type="match status" value="1"/>
</dbReference>
<dbReference type="PROSITE" id="PS01275">
    <property type="entry name" value="EFP"/>
    <property type="match status" value="1"/>
</dbReference>
<comment type="function">
    <text evidence="1">Involved in peptide bond synthesis. Stimulates efficient translation and peptide-bond synthesis on native or reconstituted 70S ribosomes in vitro. Probably functions indirectly by altering the affinity of the ribosome for aminoacyl-tRNA, thus increasing their reactivity as acceptors for peptidyl transferase.</text>
</comment>
<comment type="pathway">
    <text evidence="1">Protein biosynthesis; polypeptide chain elongation.</text>
</comment>
<comment type="subcellular location">
    <subcellularLocation>
        <location evidence="1">Cytoplasm</location>
    </subcellularLocation>
</comment>
<comment type="similarity">
    <text evidence="1">Belongs to the elongation factor P family.</text>
</comment>
<accession>Q1H0G4</accession>
<keyword id="KW-0963">Cytoplasm</keyword>
<keyword id="KW-0251">Elongation factor</keyword>
<keyword id="KW-0648">Protein biosynthesis</keyword>
<keyword id="KW-1185">Reference proteome</keyword>
<protein>
    <recommendedName>
        <fullName evidence="1">Elongation factor P</fullName>
        <shortName evidence="1">EF-P</shortName>
    </recommendedName>
</protein>
<organism>
    <name type="scientific">Methylobacillus flagellatus (strain ATCC 51484 / DSM 6875 / VKM B-1610 / KT)</name>
    <dbReference type="NCBI Taxonomy" id="265072"/>
    <lineage>
        <taxon>Bacteria</taxon>
        <taxon>Pseudomonadati</taxon>
        <taxon>Pseudomonadota</taxon>
        <taxon>Betaproteobacteria</taxon>
        <taxon>Nitrosomonadales</taxon>
        <taxon>Methylophilaceae</taxon>
        <taxon>Methylobacillus</taxon>
    </lineage>
</organism>